<dbReference type="EMBL" id="AE005672">
    <property type="protein sequence ID" value="AAK74538.1"/>
    <property type="molecule type" value="Genomic_DNA"/>
</dbReference>
<dbReference type="PIR" id="A95043">
    <property type="entry name" value="A95043"/>
</dbReference>
<dbReference type="RefSeq" id="WP_000179547.1">
    <property type="nucleotide sequence ID" value="NZ_CP155539.1"/>
</dbReference>
<dbReference type="SMR" id="Q97SJ0"/>
<dbReference type="IntAct" id="Q97SJ0">
    <property type="interactions" value="1"/>
</dbReference>
<dbReference type="PaxDb" id="170187-SP_0371"/>
<dbReference type="EnsemblBacteria" id="AAK74538">
    <property type="protein sequence ID" value="AAK74538"/>
    <property type="gene ID" value="SP_0371"/>
</dbReference>
<dbReference type="KEGG" id="spn:SP_0371"/>
<dbReference type="eggNOG" id="COG4474">
    <property type="taxonomic scope" value="Bacteria"/>
</dbReference>
<dbReference type="PhylomeDB" id="Q97SJ0"/>
<dbReference type="BioCyc" id="SPNE170187:G1FZB-382-MONOMER"/>
<dbReference type="Proteomes" id="UP000000585">
    <property type="component" value="Chromosome"/>
</dbReference>
<dbReference type="Gene3D" id="3.40.50.450">
    <property type="match status" value="1"/>
</dbReference>
<dbReference type="HAMAP" id="MF_01575">
    <property type="entry name" value="UPF0398"/>
    <property type="match status" value="1"/>
</dbReference>
<dbReference type="InterPro" id="IPR010697">
    <property type="entry name" value="YspA"/>
</dbReference>
<dbReference type="NCBIfam" id="NF010181">
    <property type="entry name" value="PRK13660.1"/>
    <property type="match status" value="1"/>
</dbReference>
<dbReference type="PANTHER" id="PTHR38440:SF1">
    <property type="entry name" value="UPF0398 PROTEIN SPR0331"/>
    <property type="match status" value="1"/>
</dbReference>
<dbReference type="PANTHER" id="PTHR38440">
    <property type="entry name" value="UPF0398 PROTEIN YPSA"/>
    <property type="match status" value="1"/>
</dbReference>
<dbReference type="Pfam" id="PF06908">
    <property type="entry name" value="YpsA"/>
    <property type="match status" value="1"/>
</dbReference>
<dbReference type="PIRSF" id="PIRSF021290">
    <property type="entry name" value="DUF1273"/>
    <property type="match status" value="1"/>
</dbReference>
<dbReference type="SUPFAM" id="SSF102405">
    <property type="entry name" value="MCP/YpsA-like"/>
    <property type="match status" value="1"/>
</dbReference>
<protein>
    <recommendedName>
        <fullName evidence="1">UPF0398 protein SP_0371</fullName>
    </recommendedName>
</protein>
<name>Y371_STRPN</name>
<evidence type="ECO:0000255" key="1">
    <source>
        <dbReference type="HAMAP-Rule" id="MF_01575"/>
    </source>
</evidence>
<accession>Q97SJ0</accession>
<gene>
    <name type="ordered locus">SP_0371</name>
</gene>
<reference key="1">
    <citation type="journal article" date="2001" name="Science">
        <title>Complete genome sequence of a virulent isolate of Streptococcus pneumoniae.</title>
        <authorList>
            <person name="Tettelin H."/>
            <person name="Nelson K.E."/>
            <person name="Paulsen I.T."/>
            <person name="Eisen J.A."/>
            <person name="Read T.D."/>
            <person name="Peterson S.N."/>
            <person name="Heidelberg J.F."/>
            <person name="DeBoy R.T."/>
            <person name="Haft D.H."/>
            <person name="Dodson R.J."/>
            <person name="Durkin A.S."/>
            <person name="Gwinn M.L."/>
            <person name="Kolonay J.F."/>
            <person name="Nelson W.C."/>
            <person name="Peterson J.D."/>
            <person name="Umayam L.A."/>
            <person name="White O."/>
            <person name="Salzberg S.L."/>
            <person name="Lewis M.R."/>
            <person name="Radune D."/>
            <person name="Holtzapple E.K."/>
            <person name="Khouri H.M."/>
            <person name="Wolf A.M."/>
            <person name="Utterback T.R."/>
            <person name="Hansen C.L."/>
            <person name="McDonald L.A."/>
            <person name="Feldblyum T.V."/>
            <person name="Angiuoli S.V."/>
            <person name="Dickinson T."/>
            <person name="Hickey E.K."/>
            <person name="Holt I.E."/>
            <person name="Loftus B.J."/>
            <person name="Yang F."/>
            <person name="Smith H.O."/>
            <person name="Venter J.C."/>
            <person name="Dougherty B.A."/>
            <person name="Morrison D.A."/>
            <person name="Hollingshead S.K."/>
            <person name="Fraser C.M."/>
        </authorList>
    </citation>
    <scope>NUCLEOTIDE SEQUENCE [LARGE SCALE GENOMIC DNA]</scope>
    <source>
        <strain>ATCC BAA-334 / TIGR4</strain>
    </source>
</reference>
<feature type="chain" id="PRO_0000267185" description="UPF0398 protein SP_0371">
    <location>
        <begin position="1"/>
        <end position="175"/>
    </location>
</feature>
<comment type="interaction">
    <interactant intactId="EBI-6473258">
        <id>Q97SJ0</id>
    </interactant>
    <interactant intactId="EBI-6473264">
        <id>Q54801</id>
        <label>dhfR</label>
    </interactant>
    <organismsDiffer>false</organismsDiffer>
    <experiments>4</experiments>
</comment>
<comment type="similarity">
    <text evidence="1">Belongs to the UPF0398 family.</text>
</comment>
<keyword id="KW-1185">Reference proteome</keyword>
<sequence length="175" mass="20707">MATALVLGYSAFDLGLFSDKDPRLKLIKKAIRKDLEAMAADGVSWLVFTGSLGFEYWVLEVAQEMKTEYGFQLATIFAFETHGENWNEGNQMKLSRFKQVDFVKYAYPRYEHKGQLRDYQQFLLENTTSSYLFYDEENETKLAYFYQKMKNQEDYFIKRLTFDELNELAENFSEN</sequence>
<proteinExistence type="evidence at protein level"/>
<organism>
    <name type="scientific">Streptococcus pneumoniae serotype 4 (strain ATCC BAA-334 / TIGR4)</name>
    <dbReference type="NCBI Taxonomy" id="170187"/>
    <lineage>
        <taxon>Bacteria</taxon>
        <taxon>Bacillati</taxon>
        <taxon>Bacillota</taxon>
        <taxon>Bacilli</taxon>
        <taxon>Lactobacillales</taxon>
        <taxon>Streptococcaceae</taxon>
        <taxon>Streptococcus</taxon>
    </lineage>
</organism>